<gene>
    <name type="primary">virB4</name>
    <name type="ordered locus">Atu6170</name>
    <name type="ORF">AGR_pTi_8</name>
</gene>
<proteinExistence type="inferred from homology"/>
<comment type="function">
    <text>A possible function of virB4 might be to provide the energy, via hydrolysis of ATP, for translocation of virulence proteins of the transfer of a T-DNA-protein complex across the agrobacterium membrane.</text>
</comment>
<comment type="similarity">
    <text evidence="2">Belongs to the TrbE/VirB4 family.</text>
</comment>
<sequence length="789" mass="87477">MLGASGTTERSGEVYLPYVGHVSDHIVLLEDGSIMTMAHVSGMAFELEDAEMRNARCRAFNTLLRNIADDHVSIYAHLVRHDDVPPSPARHFRSAFSASLSEAFEERVLSGKLLRNDHFLTLIVSPRAALGKVRRRFTKRYRQKENDLTAQTRNLEDLWHLVAGALEAYGLRRLGIREKQDVLFTEVGEALRLIMTGRFTPVPVVSGSLGASIYTDRVICGKRGLEIRTPKDSYVGSIYSFREYPATTRPGMLNVLLSLDFPLVLTQSFSFLTRSQAHSKLSLKSSQMLSSGDKAVTQISKLSEAEDALASNEFVLGAHHVSLCIYANDLNNLADRGARARTRLADAGAVVVQEGIGMEAAYWSQLPGNYKWRTRPGAITSRNFAGLVSFENFPEGSGSGHWGNAIARFRTNGGTPFDYIPHEHDVGMTAIFGPIGRGKTTLMTFILAMLEQSMVDRAGAVVLFDKDRGSELLVRATGGTYLALRRGAPSGLAPLRGLENTAASHDFLREWIVALIESDGRGGISPEENRRLVRGIHRQLSFDPHMRSIAGLREFLLHGPAEGAGARLQRWCRGNALGWAFDGELDEVKLDPSITGFDMTHLLEYEEVCAAAAAYLLHRIGAMVDGRRFVMSCDEFRAYLLNPKFAAVVDKFLLTVRKNNGMLILATQQPEHVLESQLGASLVAQCMTKIFYPSPTADRSAYIDGLKCTEKEFQAIREDMAVGSRKFLLKRESGSVVCEFDLREMREYVAVLSGRANTVRFADQLRKVQGDNPSAWLSEFMARYHEAKD</sequence>
<protein>
    <recommendedName>
        <fullName>Protein virB4</fullName>
    </recommendedName>
</protein>
<name>VIRB4_AGRFC</name>
<accession>P17794</accession>
<reference key="1">
    <citation type="journal article" date="1990" name="Mol. Gen. Genet.">
        <title>The virB operon of Agrobacterium tumefaciens pTiC58 encodes 11 open reading frames.</title>
        <authorList>
            <person name="Kuldau G.A."/>
            <person name="de Vos G."/>
            <person name="Owen J."/>
            <person name="McCaffrey G."/>
            <person name="Zambryski P."/>
        </authorList>
    </citation>
    <scope>NUCLEOTIDE SEQUENCE [GENOMIC DNA]</scope>
</reference>
<reference key="2">
    <citation type="journal article" date="1990" name="Plasmid">
        <title>Molecular characterization of the vir regulon of Agrobacterium tumefaciens: complete nucleotide sequence and gene organization of the 28.63-kbp regulon cloned as a single unit.</title>
        <authorList>
            <person name="Rogowsky P.M."/>
            <person name="Powell B.S."/>
            <person name="Shirasu K."/>
            <person name="Lin T.-S."/>
            <person name="Morel P."/>
            <person name="Zyprian E.M."/>
            <person name="Steck T.R."/>
            <person name="Kado C.I."/>
        </authorList>
    </citation>
    <scope>NUCLEOTIDE SEQUENCE [GENOMIC DNA]</scope>
</reference>
<reference key="3">
    <citation type="journal article" date="1990" name="Mol. Microbiol.">
        <title>Characterization of the virB operon of an Agrobacterium tumefaciens Ti plasmid: nucleotide sequence and protein analysis.</title>
        <authorList>
            <person name="Shirasu K."/>
            <person name="Morel P."/>
            <person name="Kado C.I."/>
        </authorList>
    </citation>
    <scope>NUCLEOTIDE SEQUENCE [GENOMIC DNA]</scope>
</reference>
<reference key="4">
    <citation type="journal article" date="2001" name="Science">
        <title>The genome of the natural genetic engineer Agrobacterium tumefaciens C58.</title>
        <authorList>
            <person name="Wood D.W."/>
            <person name="Setubal J.C."/>
            <person name="Kaul R."/>
            <person name="Monks D.E."/>
            <person name="Kitajima J.P."/>
            <person name="Okura V.K."/>
            <person name="Zhou Y."/>
            <person name="Chen L."/>
            <person name="Wood G.E."/>
            <person name="Almeida N.F. Jr."/>
            <person name="Woo L."/>
            <person name="Chen Y."/>
            <person name="Paulsen I.T."/>
            <person name="Eisen J.A."/>
            <person name="Karp P.D."/>
            <person name="Bovee D. Sr."/>
            <person name="Chapman P."/>
            <person name="Clendenning J."/>
            <person name="Deatherage G."/>
            <person name="Gillet W."/>
            <person name="Grant C."/>
            <person name="Kutyavin T."/>
            <person name="Levy R."/>
            <person name="Li M.-J."/>
            <person name="McClelland E."/>
            <person name="Palmieri A."/>
            <person name="Raymond C."/>
            <person name="Rouse G."/>
            <person name="Saenphimmachak C."/>
            <person name="Wu Z."/>
            <person name="Romero P."/>
            <person name="Gordon D."/>
            <person name="Zhang S."/>
            <person name="Yoo H."/>
            <person name="Tao Y."/>
            <person name="Biddle P."/>
            <person name="Jung M."/>
            <person name="Krespan W."/>
            <person name="Perry M."/>
            <person name="Gordon-Kamm B."/>
            <person name="Liao L."/>
            <person name="Kim S."/>
            <person name="Hendrick C."/>
            <person name="Zhao Z.-Y."/>
            <person name="Dolan M."/>
            <person name="Chumley F."/>
            <person name="Tingey S.V."/>
            <person name="Tomb J.-F."/>
            <person name="Gordon M.P."/>
            <person name="Olson M.V."/>
            <person name="Nester E.W."/>
        </authorList>
    </citation>
    <scope>NUCLEOTIDE SEQUENCE [LARGE SCALE GENOMIC DNA]</scope>
</reference>
<reference key="5">
    <citation type="journal article" date="2001" name="Science">
        <title>Genome sequence of the plant pathogen and biotechnology agent Agrobacterium tumefaciens C58.</title>
        <authorList>
            <person name="Goodner B."/>
            <person name="Hinkle G."/>
            <person name="Gattung S."/>
            <person name="Miller N."/>
            <person name="Blanchard M."/>
            <person name="Qurollo B."/>
            <person name="Goldman B.S."/>
            <person name="Cao Y."/>
            <person name="Askenazi M."/>
            <person name="Halling C."/>
            <person name="Mullin L."/>
            <person name="Houmiel K."/>
            <person name="Gordon J."/>
            <person name="Vaudin M."/>
            <person name="Iartchouk O."/>
            <person name="Epp A."/>
            <person name="Liu F."/>
            <person name="Wollam C."/>
            <person name="Allinger M."/>
            <person name="Doughty D."/>
            <person name="Scott C."/>
            <person name="Lappas C."/>
            <person name="Markelz B."/>
            <person name="Flanagan C."/>
            <person name="Crowell C."/>
            <person name="Gurson J."/>
            <person name="Lomo C."/>
            <person name="Sear C."/>
            <person name="Strub G."/>
            <person name="Cielo C."/>
            <person name="Slater S."/>
        </authorList>
    </citation>
    <scope>NUCLEOTIDE SEQUENCE [LARGE SCALE GENOMIC DNA]</scope>
    <source>
        <strain>C58 / ATCC 33970</strain>
    </source>
</reference>
<geneLocation type="plasmid">
    <name>pTiC58</name>
</geneLocation>
<organism>
    <name type="scientific">Agrobacterium fabrum (strain C58 / ATCC 33970)</name>
    <name type="common">Agrobacterium tumefaciens (strain C58)</name>
    <dbReference type="NCBI Taxonomy" id="176299"/>
    <lineage>
        <taxon>Bacteria</taxon>
        <taxon>Pseudomonadati</taxon>
        <taxon>Pseudomonadota</taxon>
        <taxon>Alphaproteobacteria</taxon>
        <taxon>Hyphomicrobiales</taxon>
        <taxon>Rhizobiaceae</taxon>
        <taxon>Rhizobium/Agrobacterium group</taxon>
        <taxon>Agrobacterium</taxon>
        <taxon>Agrobacterium tumefaciens complex</taxon>
    </lineage>
</organism>
<keyword id="KW-0067">ATP-binding</keyword>
<keyword id="KW-0192">Crown gall tumor</keyword>
<keyword id="KW-0547">Nucleotide-binding</keyword>
<keyword id="KW-0614">Plasmid</keyword>
<keyword id="KW-1185">Reference proteome</keyword>
<keyword id="KW-0732">Signal</keyword>
<feature type="signal peptide" evidence="1">
    <location>
        <begin position="1"/>
        <end position="38"/>
    </location>
</feature>
<feature type="chain" id="PRO_0000022663" description="Protein virB4">
    <location>
        <begin position="39"/>
        <end position="789"/>
    </location>
</feature>
<feature type="binding site" evidence="1">
    <location>
        <begin position="433"/>
        <end position="440"/>
    </location>
    <ligand>
        <name>ATP</name>
        <dbReference type="ChEBI" id="CHEBI:30616"/>
    </ligand>
</feature>
<feature type="sequence conflict" description="In Ref. 2 and 3." evidence="2" ref="2 3">
    <original>A</original>
    <variation>R</variation>
    <location>
        <position position="55"/>
    </location>
</feature>
<feature type="sequence conflict" description="In Ref. 1; CAA37357." evidence="2" ref="1">
    <original>A</original>
    <variation>R</variation>
    <location>
        <position position="59"/>
    </location>
</feature>
<feature type="sequence conflict" description="In Ref. 2 and 3." evidence="2" ref="2 3">
    <original>R</original>
    <variation>G</variation>
    <location>
        <position position="249"/>
    </location>
</feature>
<feature type="sequence conflict" description="In Ref. 2 and 3." evidence="2" ref="2 3">
    <original>AP</original>
    <variation>G</variation>
    <location>
        <begin position="488"/>
        <end position="489"/>
    </location>
</feature>
<feature type="sequence conflict" description="In Ref. 2 and 3." evidence="2" ref="2 3">
    <original>E</original>
    <variation>Q</variation>
    <location>
        <position position="527"/>
    </location>
</feature>
<feature type="sequence conflict" description="In Ref. 2 and 3." evidence="2" ref="2 3">
    <original>A</original>
    <variation>R</variation>
    <location>
        <position position="613"/>
    </location>
</feature>
<evidence type="ECO:0000255" key="1"/>
<evidence type="ECO:0000305" key="2"/>
<dbReference type="EMBL" id="X53264">
    <property type="protein sequence ID" value="CAA37357.1"/>
    <property type="molecule type" value="Genomic_DNA"/>
</dbReference>
<dbReference type="EMBL" id="J03320">
    <property type="protein sequence ID" value="AAA91594.1"/>
    <property type="molecule type" value="Genomic_DNA"/>
</dbReference>
<dbReference type="EMBL" id="AE007871">
    <property type="protein sequence ID" value="AAK90932.1"/>
    <property type="molecule type" value="Genomic_DNA"/>
</dbReference>
<dbReference type="PIR" id="AH3248">
    <property type="entry name" value="AH3248"/>
</dbReference>
<dbReference type="PIR" id="S12344">
    <property type="entry name" value="B4AG58"/>
</dbReference>
<dbReference type="RefSeq" id="NP_396491.1">
    <property type="nucleotide sequence ID" value="NC_003065.3"/>
</dbReference>
<dbReference type="RefSeq" id="WP_010974916.1">
    <property type="nucleotide sequence ID" value="NC_003065.3"/>
</dbReference>
<dbReference type="SMR" id="P17794"/>
<dbReference type="EnsemblBacteria" id="AAK90932">
    <property type="protein sequence ID" value="AAK90932"/>
    <property type="gene ID" value="Atu6170"/>
</dbReference>
<dbReference type="GeneID" id="86882425"/>
<dbReference type="KEGG" id="atu:Atu6170"/>
<dbReference type="PATRIC" id="fig|176299.10.peg.5366"/>
<dbReference type="HOGENOM" id="CLU_008341_3_0_5"/>
<dbReference type="OrthoDB" id="9816422at2"/>
<dbReference type="PhylomeDB" id="P17794"/>
<dbReference type="BioCyc" id="AGRO:ATU6170-MONOMER"/>
<dbReference type="PHI-base" id="PHI:11109"/>
<dbReference type="Proteomes" id="UP000000813">
    <property type="component" value="Plasmid Ti"/>
</dbReference>
<dbReference type="GO" id="GO:0043684">
    <property type="term" value="C:type IV secretion system complex"/>
    <property type="evidence" value="ECO:0000317"/>
    <property type="project" value="PAMGO_GAT"/>
</dbReference>
<dbReference type="GO" id="GO:0005524">
    <property type="term" value="F:ATP binding"/>
    <property type="evidence" value="ECO:0007669"/>
    <property type="project" value="UniProtKB-KW"/>
</dbReference>
<dbReference type="GO" id="GO:0030255">
    <property type="term" value="P:protein secretion by the type IV secretion system"/>
    <property type="evidence" value="ECO:0000317"/>
    <property type="project" value="PAMGO_GAT"/>
</dbReference>
<dbReference type="Gene3D" id="3.40.50.300">
    <property type="entry name" value="P-loop containing nucleotide triphosphate hydrolases"/>
    <property type="match status" value="1"/>
</dbReference>
<dbReference type="InterPro" id="IPR004346">
    <property type="entry name" value="CagE_TrbE_VirB"/>
</dbReference>
<dbReference type="InterPro" id="IPR018145">
    <property type="entry name" value="CagE_TrbE_VirB_cntrl_dom"/>
</dbReference>
<dbReference type="InterPro" id="IPR027417">
    <property type="entry name" value="P-loop_NTPase"/>
</dbReference>
<dbReference type="InterPro" id="IPR051162">
    <property type="entry name" value="T4SS_component"/>
</dbReference>
<dbReference type="NCBIfam" id="NF010427">
    <property type="entry name" value="PRK13853.1"/>
    <property type="match status" value="1"/>
</dbReference>
<dbReference type="NCBIfam" id="TIGR00929">
    <property type="entry name" value="VirB4_CagE"/>
    <property type="match status" value="1"/>
</dbReference>
<dbReference type="PANTHER" id="PTHR30121:SF12">
    <property type="entry name" value="TYPE IV SECRETION SYSTEM PROTEIN CAGE"/>
    <property type="match status" value="1"/>
</dbReference>
<dbReference type="PANTHER" id="PTHR30121">
    <property type="entry name" value="UNCHARACTERIZED PROTEIN YJGR-RELATED"/>
    <property type="match status" value="1"/>
</dbReference>
<dbReference type="Pfam" id="PF03135">
    <property type="entry name" value="CagE_TrbE_VirB"/>
    <property type="match status" value="1"/>
</dbReference>
<dbReference type="SUPFAM" id="SSF52540">
    <property type="entry name" value="P-loop containing nucleoside triphosphate hydrolases"/>
    <property type="match status" value="1"/>
</dbReference>